<comment type="subcellular location">
    <subcellularLocation>
        <location evidence="3">Membrane</location>
        <topology evidence="3">Single-pass membrane protein</topology>
    </subcellularLocation>
</comment>
<feature type="chain" id="PRO_0000421255" description="Small integral membrane protein 17">
    <location>
        <begin position="1"/>
        <end position="118"/>
    </location>
</feature>
<feature type="transmembrane region" description="Helical" evidence="1">
    <location>
        <begin position="96"/>
        <end position="116"/>
    </location>
</feature>
<feature type="region of interest" description="Disordered" evidence="2">
    <location>
        <begin position="1"/>
        <end position="84"/>
    </location>
</feature>
<feature type="compositionally biased region" description="Basic and acidic residues" evidence="2">
    <location>
        <begin position="13"/>
        <end position="42"/>
    </location>
</feature>
<gene>
    <name type="primary">SMIM17</name>
</gene>
<accession>P0DL12</accession>
<evidence type="ECO:0000255" key="1"/>
<evidence type="ECO:0000256" key="2">
    <source>
        <dbReference type="SAM" id="MobiDB-lite"/>
    </source>
</evidence>
<evidence type="ECO:0000305" key="3"/>
<keyword id="KW-0472">Membrane</keyword>
<keyword id="KW-1185">Reference proteome</keyword>
<keyword id="KW-0812">Transmembrane</keyword>
<keyword id="KW-1133">Transmembrane helix</keyword>
<name>SIM17_HUMAN</name>
<sequence length="118" mass="13332">MQSLRPEQTRGLLEPERTKTLLPRESRAWEKPPHPACTKDWEAVEVGASSHDSDEKDLSSQETGLSQEWSSVEEDDESEGSQGFVEWSKAPQQTTIVLVVCVLFLFLVLTGMPMMFHI</sequence>
<proteinExistence type="predicted"/>
<protein>
    <recommendedName>
        <fullName>Small integral membrane protein 17</fullName>
    </recommendedName>
</protein>
<organism>
    <name type="scientific">Homo sapiens</name>
    <name type="common">Human</name>
    <dbReference type="NCBI Taxonomy" id="9606"/>
    <lineage>
        <taxon>Eukaryota</taxon>
        <taxon>Metazoa</taxon>
        <taxon>Chordata</taxon>
        <taxon>Craniata</taxon>
        <taxon>Vertebrata</taxon>
        <taxon>Euteleostomi</taxon>
        <taxon>Mammalia</taxon>
        <taxon>Eutheria</taxon>
        <taxon>Euarchontoglires</taxon>
        <taxon>Primates</taxon>
        <taxon>Haplorrhini</taxon>
        <taxon>Catarrhini</taxon>
        <taxon>Hominidae</taxon>
        <taxon>Homo</taxon>
    </lineage>
</organism>
<dbReference type="EMBL" id="AK095199">
    <property type="status" value="NOT_ANNOTATED_CDS"/>
    <property type="molecule type" value="mRNA"/>
</dbReference>
<dbReference type="EMBL" id="AC007228">
    <property type="status" value="NOT_ANNOTATED_CDS"/>
    <property type="molecule type" value="Genomic_DNA"/>
</dbReference>
<dbReference type="EMBL" id="CH471135">
    <property type="protein sequence ID" value="EAW72469.1"/>
    <property type="molecule type" value="Genomic_DNA"/>
</dbReference>
<dbReference type="CCDS" id="CCDS58683.1"/>
<dbReference type="RefSeq" id="NP_001180557.1">
    <property type="nucleotide sequence ID" value="NM_001193628.2"/>
</dbReference>
<dbReference type="BioGRID" id="127072">
    <property type="interactions" value="1"/>
</dbReference>
<dbReference type="STRING" id="9606.ENSP00000471126"/>
<dbReference type="iPTMnet" id="P0DL12"/>
<dbReference type="PhosphoSitePlus" id="P0DL12"/>
<dbReference type="BioMuta" id="SMIM17"/>
<dbReference type="DMDM" id="476007219"/>
<dbReference type="PaxDb" id="9606-ENSP00000471126"/>
<dbReference type="Antibodypedia" id="77518">
    <property type="antibodies" value="8 antibodies from 4 providers"/>
</dbReference>
<dbReference type="DNASU" id="147670"/>
<dbReference type="Ensembl" id="ENST00000598409.6">
    <property type="protein sequence ID" value="ENSP00000471126.1"/>
    <property type="gene ID" value="ENSG00000268182.6"/>
</dbReference>
<dbReference type="GeneID" id="147670"/>
<dbReference type="KEGG" id="hsa:147670"/>
<dbReference type="MANE-Select" id="ENST00000598409.6">
    <property type="protein sequence ID" value="ENSP00000471126.1"/>
    <property type="RefSeq nucleotide sequence ID" value="NM_001193628.2"/>
    <property type="RefSeq protein sequence ID" value="NP_001180557.1"/>
</dbReference>
<dbReference type="UCSC" id="uc021vch.2">
    <property type="organism name" value="human"/>
</dbReference>
<dbReference type="AGR" id="HGNC:27114"/>
<dbReference type="CTD" id="147670"/>
<dbReference type="GeneCards" id="SMIM17"/>
<dbReference type="HGNC" id="HGNC:27114">
    <property type="gene designation" value="SMIM17"/>
</dbReference>
<dbReference type="HPA" id="ENSG00000268182">
    <property type="expression patterns" value="Tissue enhanced (brain)"/>
</dbReference>
<dbReference type="neXtProt" id="NX_P0DL12"/>
<dbReference type="VEuPathDB" id="HostDB:ENSG00000268182"/>
<dbReference type="eggNOG" id="ENOG502T3FQ">
    <property type="taxonomic scope" value="Eukaryota"/>
</dbReference>
<dbReference type="GeneTree" id="ENSGT00490000044430"/>
<dbReference type="HOGENOM" id="CLU_172215_0_0_1"/>
<dbReference type="InParanoid" id="P0DL12"/>
<dbReference type="OMA" id="QEWTSAD"/>
<dbReference type="OrthoDB" id="9835607at2759"/>
<dbReference type="PAN-GO" id="P0DL12">
    <property type="GO annotations" value="0 GO annotations based on evolutionary models"/>
</dbReference>
<dbReference type="PhylomeDB" id="P0DL12"/>
<dbReference type="PathwayCommons" id="P0DL12"/>
<dbReference type="SignaLink" id="P0DL12"/>
<dbReference type="BioGRID-ORCS" id="147670">
    <property type="hits" value="15 hits in 1070 CRISPR screens"/>
</dbReference>
<dbReference type="GenomeRNAi" id="147670"/>
<dbReference type="Pharos" id="P0DL12">
    <property type="development level" value="Tdark"/>
</dbReference>
<dbReference type="PRO" id="PR:P0DL12"/>
<dbReference type="Proteomes" id="UP000005640">
    <property type="component" value="Chromosome 19"/>
</dbReference>
<dbReference type="RNAct" id="P0DL12">
    <property type="molecule type" value="protein"/>
</dbReference>
<dbReference type="Bgee" id="ENSG00000268182">
    <property type="expression patterns" value="Expressed in Brodmann (1909) area 46 and 117 other cell types or tissues"/>
</dbReference>
<dbReference type="ExpressionAtlas" id="P0DL12">
    <property type="expression patterns" value="baseline and differential"/>
</dbReference>
<dbReference type="GO" id="GO:0016020">
    <property type="term" value="C:membrane"/>
    <property type="evidence" value="ECO:0007669"/>
    <property type="project" value="UniProtKB-SubCell"/>
</dbReference>
<reference key="1">
    <citation type="journal article" date="2004" name="Nat. Genet.">
        <title>Complete sequencing and characterization of 21,243 full-length human cDNAs.</title>
        <authorList>
            <person name="Ota T."/>
            <person name="Suzuki Y."/>
            <person name="Nishikawa T."/>
            <person name="Otsuki T."/>
            <person name="Sugiyama T."/>
            <person name="Irie R."/>
            <person name="Wakamatsu A."/>
            <person name="Hayashi K."/>
            <person name="Sato H."/>
            <person name="Nagai K."/>
            <person name="Kimura K."/>
            <person name="Makita H."/>
            <person name="Sekine M."/>
            <person name="Obayashi M."/>
            <person name="Nishi T."/>
            <person name="Shibahara T."/>
            <person name="Tanaka T."/>
            <person name="Ishii S."/>
            <person name="Yamamoto J."/>
            <person name="Saito K."/>
            <person name="Kawai Y."/>
            <person name="Isono Y."/>
            <person name="Nakamura Y."/>
            <person name="Nagahari K."/>
            <person name="Murakami K."/>
            <person name="Yasuda T."/>
            <person name="Iwayanagi T."/>
            <person name="Wagatsuma M."/>
            <person name="Shiratori A."/>
            <person name="Sudo H."/>
            <person name="Hosoiri T."/>
            <person name="Kaku Y."/>
            <person name="Kodaira H."/>
            <person name="Kondo H."/>
            <person name="Sugawara M."/>
            <person name="Takahashi M."/>
            <person name="Kanda K."/>
            <person name="Yokoi T."/>
            <person name="Furuya T."/>
            <person name="Kikkawa E."/>
            <person name="Omura Y."/>
            <person name="Abe K."/>
            <person name="Kamihara K."/>
            <person name="Katsuta N."/>
            <person name="Sato K."/>
            <person name="Tanikawa M."/>
            <person name="Yamazaki M."/>
            <person name="Ninomiya K."/>
            <person name="Ishibashi T."/>
            <person name="Yamashita H."/>
            <person name="Murakawa K."/>
            <person name="Fujimori K."/>
            <person name="Tanai H."/>
            <person name="Kimata M."/>
            <person name="Watanabe M."/>
            <person name="Hiraoka S."/>
            <person name="Chiba Y."/>
            <person name="Ishida S."/>
            <person name="Ono Y."/>
            <person name="Takiguchi S."/>
            <person name="Watanabe S."/>
            <person name="Yosida M."/>
            <person name="Hotuta T."/>
            <person name="Kusano J."/>
            <person name="Kanehori K."/>
            <person name="Takahashi-Fujii A."/>
            <person name="Hara H."/>
            <person name="Tanase T.-O."/>
            <person name="Nomura Y."/>
            <person name="Togiya S."/>
            <person name="Komai F."/>
            <person name="Hara R."/>
            <person name="Takeuchi K."/>
            <person name="Arita M."/>
            <person name="Imose N."/>
            <person name="Musashino K."/>
            <person name="Yuuki H."/>
            <person name="Oshima A."/>
            <person name="Sasaki N."/>
            <person name="Aotsuka S."/>
            <person name="Yoshikawa Y."/>
            <person name="Matsunawa H."/>
            <person name="Ichihara T."/>
            <person name="Shiohata N."/>
            <person name="Sano S."/>
            <person name="Moriya S."/>
            <person name="Momiyama H."/>
            <person name="Satoh N."/>
            <person name="Takami S."/>
            <person name="Terashima Y."/>
            <person name="Suzuki O."/>
            <person name="Nakagawa S."/>
            <person name="Senoh A."/>
            <person name="Mizoguchi H."/>
            <person name="Goto Y."/>
            <person name="Shimizu F."/>
            <person name="Wakebe H."/>
            <person name="Hishigaki H."/>
            <person name="Watanabe T."/>
            <person name="Sugiyama A."/>
            <person name="Takemoto M."/>
            <person name="Kawakami B."/>
            <person name="Yamazaki M."/>
            <person name="Watanabe K."/>
            <person name="Kumagai A."/>
            <person name="Itakura S."/>
            <person name="Fukuzumi Y."/>
            <person name="Fujimori Y."/>
            <person name="Komiyama M."/>
            <person name="Tashiro H."/>
            <person name="Tanigami A."/>
            <person name="Fujiwara T."/>
            <person name="Ono T."/>
            <person name="Yamada K."/>
            <person name="Fujii Y."/>
            <person name="Ozaki K."/>
            <person name="Hirao M."/>
            <person name="Ohmori Y."/>
            <person name="Kawabata A."/>
            <person name="Hikiji T."/>
            <person name="Kobatake N."/>
            <person name="Inagaki H."/>
            <person name="Ikema Y."/>
            <person name="Okamoto S."/>
            <person name="Okitani R."/>
            <person name="Kawakami T."/>
            <person name="Noguchi S."/>
            <person name="Itoh T."/>
            <person name="Shigeta K."/>
            <person name="Senba T."/>
            <person name="Matsumura K."/>
            <person name="Nakajima Y."/>
            <person name="Mizuno T."/>
            <person name="Morinaga M."/>
            <person name="Sasaki M."/>
            <person name="Togashi T."/>
            <person name="Oyama M."/>
            <person name="Hata H."/>
            <person name="Watanabe M."/>
            <person name="Komatsu T."/>
            <person name="Mizushima-Sugano J."/>
            <person name="Satoh T."/>
            <person name="Shirai Y."/>
            <person name="Takahashi Y."/>
            <person name="Nakagawa K."/>
            <person name="Okumura K."/>
            <person name="Nagase T."/>
            <person name="Nomura N."/>
            <person name="Kikuchi H."/>
            <person name="Masuho Y."/>
            <person name="Yamashita R."/>
            <person name="Nakai K."/>
            <person name="Yada T."/>
            <person name="Nakamura Y."/>
            <person name="Ohara O."/>
            <person name="Isogai T."/>
            <person name="Sugano S."/>
        </authorList>
    </citation>
    <scope>NUCLEOTIDE SEQUENCE [LARGE SCALE MRNA]</scope>
    <source>
        <tissue>Subthalamic nucleus</tissue>
    </source>
</reference>
<reference key="2">
    <citation type="journal article" date="2004" name="Nature">
        <title>The DNA sequence and biology of human chromosome 19.</title>
        <authorList>
            <person name="Grimwood J."/>
            <person name="Gordon L.A."/>
            <person name="Olsen A.S."/>
            <person name="Terry A."/>
            <person name="Schmutz J."/>
            <person name="Lamerdin J.E."/>
            <person name="Hellsten U."/>
            <person name="Goodstein D."/>
            <person name="Couronne O."/>
            <person name="Tran-Gyamfi M."/>
            <person name="Aerts A."/>
            <person name="Altherr M."/>
            <person name="Ashworth L."/>
            <person name="Bajorek E."/>
            <person name="Black S."/>
            <person name="Branscomb E."/>
            <person name="Caenepeel S."/>
            <person name="Carrano A.V."/>
            <person name="Caoile C."/>
            <person name="Chan Y.M."/>
            <person name="Christensen M."/>
            <person name="Cleland C.A."/>
            <person name="Copeland A."/>
            <person name="Dalin E."/>
            <person name="Dehal P."/>
            <person name="Denys M."/>
            <person name="Detter J.C."/>
            <person name="Escobar J."/>
            <person name="Flowers D."/>
            <person name="Fotopulos D."/>
            <person name="Garcia C."/>
            <person name="Georgescu A.M."/>
            <person name="Glavina T."/>
            <person name="Gomez M."/>
            <person name="Gonzales E."/>
            <person name="Groza M."/>
            <person name="Hammon N."/>
            <person name="Hawkins T."/>
            <person name="Haydu L."/>
            <person name="Ho I."/>
            <person name="Huang W."/>
            <person name="Israni S."/>
            <person name="Jett J."/>
            <person name="Kadner K."/>
            <person name="Kimball H."/>
            <person name="Kobayashi A."/>
            <person name="Larionov V."/>
            <person name="Leem S.-H."/>
            <person name="Lopez F."/>
            <person name="Lou Y."/>
            <person name="Lowry S."/>
            <person name="Malfatti S."/>
            <person name="Martinez D."/>
            <person name="McCready P.M."/>
            <person name="Medina C."/>
            <person name="Morgan J."/>
            <person name="Nelson K."/>
            <person name="Nolan M."/>
            <person name="Ovcharenko I."/>
            <person name="Pitluck S."/>
            <person name="Pollard M."/>
            <person name="Popkie A.P."/>
            <person name="Predki P."/>
            <person name="Quan G."/>
            <person name="Ramirez L."/>
            <person name="Rash S."/>
            <person name="Retterer J."/>
            <person name="Rodriguez A."/>
            <person name="Rogers S."/>
            <person name="Salamov A."/>
            <person name="Salazar A."/>
            <person name="She X."/>
            <person name="Smith D."/>
            <person name="Slezak T."/>
            <person name="Solovyev V."/>
            <person name="Thayer N."/>
            <person name="Tice H."/>
            <person name="Tsai M."/>
            <person name="Ustaszewska A."/>
            <person name="Vo N."/>
            <person name="Wagner M."/>
            <person name="Wheeler J."/>
            <person name="Wu K."/>
            <person name="Xie G."/>
            <person name="Yang J."/>
            <person name="Dubchak I."/>
            <person name="Furey T.S."/>
            <person name="DeJong P."/>
            <person name="Dickson M."/>
            <person name="Gordon D."/>
            <person name="Eichler E.E."/>
            <person name="Pennacchio L.A."/>
            <person name="Richardson P."/>
            <person name="Stubbs L."/>
            <person name="Rokhsar D.S."/>
            <person name="Myers R.M."/>
            <person name="Rubin E.M."/>
            <person name="Lucas S.M."/>
        </authorList>
    </citation>
    <scope>NUCLEOTIDE SEQUENCE [LARGE SCALE GENOMIC DNA]</scope>
</reference>
<reference key="3">
    <citation type="submission" date="2005-07" db="EMBL/GenBank/DDBJ databases">
        <authorList>
            <person name="Mural R.J."/>
            <person name="Istrail S."/>
            <person name="Sutton G.G."/>
            <person name="Florea L."/>
            <person name="Halpern A.L."/>
            <person name="Mobarry C.M."/>
            <person name="Lippert R."/>
            <person name="Walenz B."/>
            <person name="Shatkay H."/>
            <person name="Dew I."/>
            <person name="Miller J.R."/>
            <person name="Flanigan M.J."/>
            <person name="Edwards N.J."/>
            <person name="Bolanos R."/>
            <person name="Fasulo D."/>
            <person name="Halldorsson B.V."/>
            <person name="Hannenhalli S."/>
            <person name="Turner R."/>
            <person name="Yooseph S."/>
            <person name="Lu F."/>
            <person name="Nusskern D.R."/>
            <person name="Shue B.C."/>
            <person name="Zheng X.H."/>
            <person name="Zhong F."/>
            <person name="Delcher A.L."/>
            <person name="Huson D.H."/>
            <person name="Kravitz S.A."/>
            <person name="Mouchard L."/>
            <person name="Reinert K."/>
            <person name="Remington K.A."/>
            <person name="Clark A.G."/>
            <person name="Waterman M.S."/>
            <person name="Eichler E.E."/>
            <person name="Adams M.D."/>
            <person name="Hunkapiller M.W."/>
            <person name="Myers E.W."/>
            <person name="Venter J.C."/>
        </authorList>
    </citation>
    <scope>NUCLEOTIDE SEQUENCE [LARGE SCALE GENOMIC DNA]</scope>
</reference>